<dbReference type="EC" id="3.6.4.-" evidence="1"/>
<dbReference type="EMBL" id="FN392321">
    <property type="protein sequence ID" value="CAY71108.1"/>
    <property type="molecule type" value="Genomic_DNA"/>
</dbReference>
<dbReference type="RefSeq" id="XP_002493287.1">
    <property type="nucleotide sequence ID" value="XM_002493242.1"/>
</dbReference>
<dbReference type="SMR" id="C4R6C2"/>
<dbReference type="FunCoup" id="C4R6C2">
    <property type="interactions" value="205"/>
</dbReference>
<dbReference type="STRING" id="644223.C4R6C2"/>
<dbReference type="EnsemblFungi" id="CAY71108">
    <property type="protein sequence ID" value="CAY71108"/>
    <property type="gene ID" value="PAS_chr3_1045"/>
</dbReference>
<dbReference type="GeneID" id="8200007"/>
<dbReference type="KEGG" id="ppa:PAS_chr3_1045"/>
<dbReference type="eggNOG" id="KOG0735">
    <property type="taxonomic scope" value="Eukaryota"/>
</dbReference>
<dbReference type="HOGENOM" id="CLU_000688_1_1_1"/>
<dbReference type="InParanoid" id="C4R6C2"/>
<dbReference type="OMA" id="LSASWCA"/>
<dbReference type="OrthoDB" id="2187at2759"/>
<dbReference type="Proteomes" id="UP000000314">
    <property type="component" value="Chromosome 3"/>
</dbReference>
<dbReference type="GO" id="GO:0005829">
    <property type="term" value="C:cytosol"/>
    <property type="evidence" value="ECO:0007669"/>
    <property type="project" value="TreeGrafter"/>
</dbReference>
<dbReference type="GO" id="GO:0005778">
    <property type="term" value="C:peroxisomal membrane"/>
    <property type="evidence" value="ECO:0007669"/>
    <property type="project" value="TreeGrafter"/>
</dbReference>
<dbReference type="GO" id="GO:0005524">
    <property type="term" value="F:ATP binding"/>
    <property type="evidence" value="ECO:0007669"/>
    <property type="project" value="UniProtKB-KW"/>
</dbReference>
<dbReference type="GO" id="GO:0016887">
    <property type="term" value="F:ATP hydrolysis activity"/>
    <property type="evidence" value="ECO:0007669"/>
    <property type="project" value="InterPro"/>
</dbReference>
<dbReference type="GO" id="GO:0016558">
    <property type="term" value="P:protein import into peroxisome matrix"/>
    <property type="evidence" value="ECO:0007669"/>
    <property type="project" value="TreeGrafter"/>
</dbReference>
<dbReference type="CDD" id="cd19526">
    <property type="entry name" value="RecA-like_PEX1_r2"/>
    <property type="match status" value="1"/>
</dbReference>
<dbReference type="FunFam" id="3.40.50.300:FF:000149">
    <property type="entry name" value="Nuclear valosin-containing protein-like"/>
    <property type="match status" value="1"/>
</dbReference>
<dbReference type="Gene3D" id="1.10.8.60">
    <property type="match status" value="2"/>
</dbReference>
<dbReference type="Gene3D" id="3.10.330.10">
    <property type="match status" value="1"/>
</dbReference>
<dbReference type="Gene3D" id="3.40.50.300">
    <property type="entry name" value="P-loop containing nucleotide triphosphate hydrolases"/>
    <property type="match status" value="2"/>
</dbReference>
<dbReference type="InterPro" id="IPR003593">
    <property type="entry name" value="AAA+_ATPase"/>
</dbReference>
<dbReference type="InterPro" id="IPR050168">
    <property type="entry name" value="AAA_ATPase_domain"/>
</dbReference>
<dbReference type="InterPro" id="IPR041569">
    <property type="entry name" value="AAA_lid_3"/>
</dbReference>
<dbReference type="InterPro" id="IPR009010">
    <property type="entry name" value="Asp_de-COase-like_dom_sf"/>
</dbReference>
<dbReference type="InterPro" id="IPR003959">
    <property type="entry name" value="ATPase_AAA_core"/>
</dbReference>
<dbReference type="InterPro" id="IPR003960">
    <property type="entry name" value="ATPase_AAA_CS"/>
</dbReference>
<dbReference type="InterPro" id="IPR029067">
    <property type="entry name" value="CDC48_domain_2-like_sf"/>
</dbReference>
<dbReference type="InterPro" id="IPR027417">
    <property type="entry name" value="P-loop_NTPase"/>
</dbReference>
<dbReference type="InterPro" id="IPR015342">
    <property type="entry name" value="PEX1-N_C-lobe"/>
</dbReference>
<dbReference type="PANTHER" id="PTHR23077">
    <property type="entry name" value="AAA-FAMILY ATPASE"/>
    <property type="match status" value="1"/>
</dbReference>
<dbReference type="PANTHER" id="PTHR23077:SF12">
    <property type="entry name" value="PEROXISOMAL ATPASE PEX1"/>
    <property type="match status" value="1"/>
</dbReference>
<dbReference type="Pfam" id="PF00004">
    <property type="entry name" value="AAA"/>
    <property type="match status" value="2"/>
</dbReference>
<dbReference type="Pfam" id="PF17862">
    <property type="entry name" value="AAA_lid_3"/>
    <property type="match status" value="1"/>
</dbReference>
<dbReference type="Pfam" id="PF09262">
    <property type="entry name" value="PEX-1N"/>
    <property type="match status" value="1"/>
</dbReference>
<dbReference type="SMART" id="SM00382">
    <property type="entry name" value="AAA"/>
    <property type="match status" value="2"/>
</dbReference>
<dbReference type="SUPFAM" id="SSF50692">
    <property type="entry name" value="ADC-like"/>
    <property type="match status" value="1"/>
</dbReference>
<dbReference type="SUPFAM" id="SSF54585">
    <property type="entry name" value="Cdc48 domain 2-like"/>
    <property type="match status" value="1"/>
</dbReference>
<dbReference type="SUPFAM" id="SSF52540">
    <property type="entry name" value="P-loop containing nucleoside triphosphate hydrolases"/>
    <property type="match status" value="2"/>
</dbReference>
<dbReference type="PROSITE" id="PS00674">
    <property type="entry name" value="AAA"/>
    <property type="match status" value="1"/>
</dbReference>
<evidence type="ECO:0000250" key="1">
    <source>
        <dbReference type="UniProtKB" id="P24004"/>
    </source>
</evidence>
<evidence type="ECO:0000256" key="2">
    <source>
        <dbReference type="SAM" id="MobiDB-lite"/>
    </source>
</evidence>
<evidence type="ECO:0000269" key="3">
    <source>
    </source>
</evidence>
<evidence type="ECO:0000269" key="4">
    <source>
    </source>
</evidence>
<evidence type="ECO:0000303" key="5">
    <source>
    </source>
</evidence>
<evidence type="ECO:0000303" key="6">
    <source>
    </source>
</evidence>
<evidence type="ECO:0000305" key="7"/>
<feature type="chain" id="PRO_0000461159" description="Peroxisomal ATPase PEX1">
    <location>
        <begin position="1"/>
        <end position="1121"/>
    </location>
</feature>
<feature type="region of interest" description="Disordered" evidence="2">
    <location>
        <begin position="187"/>
        <end position="221"/>
    </location>
</feature>
<feature type="region of interest" description="Disordered" evidence="2">
    <location>
        <begin position="1099"/>
        <end position="1121"/>
    </location>
</feature>
<feature type="compositionally biased region" description="Low complexity" evidence="2">
    <location>
        <begin position="205"/>
        <end position="217"/>
    </location>
</feature>
<sequence length="1121" mass="122768">MNSIDAVVRYSPLRNNLCNLPSAITTMLFSADFNIQQIIVELSWVPHQRAAQRRIAYCGWAGGITKTSSSNPVIEIDRSLASAIDLQENVNVTVNVHIDAVKAITVELEPVTSNDWEIVETHAQVLETYLLNQTRCVYPNQVLVVYPTPQTTARLLVKKIEPEVSTFAQLFNDTEVQIAPKVQKRPSISSVRSDSSGHRIRRVRSSTSTATGRRSVTNNGEVLPSMLRRSITLPNNTYAHVNDSKSGGYKVYCNLNELIPALQNAHFVSVSVLVGPGTPDRTGLTSSKIKQLNDSIDQAAQTQTNAAGSSHPPESSYTETGKVIAELVHDSKSPKGNVGLSELLACSLGIENTVGNLISLEQARKPLIKNPLDTLLTQLMQLLSPLLDSCTFTNCVKLPKIGTLLPNGGLLQFKRIKSGWTTPLGKDNVSLEIGEEILRPESFIPSYDLLPDRKTHVRTQSDQYPTAQENLIESLSKIASGGSLLFGTSGSGKSLVISQVAQIVTNKGHFVKLLNCDKIMSESYNNLRGIFEDIFSEVSWKAPSLLILEDLDSLIPAEQEHSDSSQSRQLSEYFISKLSALSINRDITILASSKSKESLNSLIFTTHLIEHDFQLRAPDKEARKQILQSYLDTLNVFCSEGELLNNIAVETEGYLPKDLKVLCDRAYHDLISRDILADSDSELDIEESSTPILNGSVGDIANKQSEIENGISGLELTNNSSSTIAVDKHGATIQKDNFDSALSGYIPQSLRGVKLQKSDVRWDDIGGLRDAKSILLETLEWPTKYAPIFSSCPLRLRSGILLYGYPGCGKTLLASAVAAQCGLNFISIKGPEILNKYIGASEQSVRELFERAQAAKPCILFFDEFDSIAPKRGHDSTGVTDRVVNQMLTQMDGAEGLDGVYVLAATSRPDLIDSALLRPGRLDKSVICDMPDFDDRLDILQSVTRNMNVSKSVNLSSVAGECSGFSGADLQALAYNAYLKAVHEKLTKDESMAMAGEMDDNDDKKRMVECFQFSGNTEKKSLIELKPSDRATVIKKLEHLYQGNGNHAEGETKSKLATTAANSVIITSKDFEDSLSETKQSISQSEKRKLEAIYQQFISGRDGNMPDGTASNEIGARSTLM</sequence>
<organism>
    <name type="scientific">Komagataella phaffii (strain GS115 / ATCC 20864)</name>
    <name type="common">Yeast</name>
    <name type="synonym">Pichia pastoris</name>
    <dbReference type="NCBI Taxonomy" id="644223"/>
    <lineage>
        <taxon>Eukaryota</taxon>
        <taxon>Fungi</taxon>
        <taxon>Dikarya</taxon>
        <taxon>Ascomycota</taxon>
        <taxon>Saccharomycotina</taxon>
        <taxon>Pichiomycetes</taxon>
        <taxon>Pichiales</taxon>
        <taxon>Pichiaceae</taxon>
        <taxon>Komagataella</taxon>
    </lineage>
</organism>
<accession>C4R6C2</accession>
<name>PEX1_KOMPG</name>
<comment type="function">
    <text evidence="1 3 4">Component of the PEX1-PEX6 AAA ATPase complex involved in peroxisome biosynthesis (PubMed:7962088, PubMed:9447990). The complex acts as a protein dislocase complex that mediates the ATP-dependent extraction of the PEX5 receptor from peroxisomal membranes, an essential step for PEX5 recycling. Specifically recognizes PEX5 monoubiquitinated at 'Cys-6', and pulls it out of the peroxisome lumen through the PEX2-PEX10-PEX12 retrotranslocation channel. Extraction by the PEX1-PEX6 AAA ATPase complex is accompanied by unfolding of the TPR repeats and release of bound cargo from PEX5 (By similarity).</text>
</comment>
<comment type="catalytic activity">
    <reaction evidence="1">
        <text>ATP + H2O = ADP + phosphate + H(+)</text>
        <dbReference type="Rhea" id="RHEA:13065"/>
        <dbReference type="ChEBI" id="CHEBI:15377"/>
        <dbReference type="ChEBI" id="CHEBI:15378"/>
        <dbReference type="ChEBI" id="CHEBI:30616"/>
        <dbReference type="ChEBI" id="CHEBI:43474"/>
        <dbReference type="ChEBI" id="CHEBI:456216"/>
    </reaction>
    <physiologicalReaction direction="left-to-right" evidence="1">
        <dbReference type="Rhea" id="RHEA:13066"/>
    </physiologicalReaction>
</comment>
<comment type="subunit">
    <text evidence="4">Interacts with PEX6; forming the PEX1-PEX6 AAA ATPase complex, which is composed of a heterohexamer formed by a trimer of PEX1-PEX6 dimers.</text>
</comment>
<comment type="subcellular location">
    <subcellularLocation>
        <location evidence="4">Membrane</location>
        <topology evidence="4">Peripheral membrane protein</topology>
    </subcellularLocation>
    <text evidence="4">Associated with membranous subcellular structures distinct from mature peroxisomes.</text>
</comment>
<comment type="similarity">
    <text evidence="7">Belongs to the AAA ATPase family.</text>
</comment>
<keyword id="KW-0067">ATP-binding</keyword>
<keyword id="KW-0378">Hydrolase</keyword>
<keyword id="KW-0472">Membrane</keyword>
<keyword id="KW-0547">Nucleotide-binding</keyword>
<keyword id="KW-0962">Peroxisome biogenesis</keyword>
<keyword id="KW-0653">Protein transport</keyword>
<keyword id="KW-1185">Reference proteome</keyword>
<keyword id="KW-0813">Transport</keyword>
<reference key="1">
    <citation type="journal article" date="2009" name="Nat. Biotechnol.">
        <title>Genome sequence of the recombinant protein production host Pichia pastoris.</title>
        <authorList>
            <person name="De Schutter K."/>
            <person name="Lin Y.-C."/>
            <person name="Tiels P."/>
            <person name="Van Hecke A."/>
            <person name="Glinka S."/>
            <person name="Weber-Lehmann J."/>
            <person name="Rouze P."/>
            <person name="Van de Peer Y."/>
            <person name="Callewaert N."/>
        </authorList>
    </citation>
    <scope>NUCLEOTIDE SEQUENCE [LARGE SCALE GENOMIC DNA]</scope>
    <source>
        <strain>GS115 / ATCC 20864</strain>
    </source>
</reference>
<reference key="2">
    <citation type="journal article" date="1994" name="J. Cell Biol.">
        <title>Role of the PAS1 gene of Pichia pastoris in peroxisome biogenesis.</title>
        <authorList>
            <person name="Heyman J.A."/>
            <person name="Monosov E."/>
            <person name="Subramani S."/>
        </authorList>
    </citation>
    <scope>FUNCTION</scope>
</reference>
<reference key="3">
    <citation type="journal article" date="1998" name="Mol. Cell. Biol.">
        <title>Two AAA family peroxins, PpPex1p and PpPex6p, interact with each other in an ATP-dependent manner and are associated with different subcellular membranous structures distinct from peroxisomes.</title>
        <authorList>
            <person name="Faber K.N."/>
            <person name="Heyman J.A."/>
            <person name="Subramani S."/>
        </authorList>
    </citation>
    <scope>FUNCTION</scope>
    <scope>INTERACTION WITH PEX6</scope>
    <scope>SUBCELLULAR LOCATION</scope>
</reference>
<proteinExistence type="evidence at protein level"/>
<protein>
    <recommendedName>
        <fullName evidence="6">Peroxisomal ATPase PEX1</fullName>
        <ecNumber evidence="1">3.6.4.-</ecNumber>
    </recommendedName>
    <alternativeName>
        <fullName evidence="6">Peroxin-1</fullName>
    </alternativeName>
    <alternativeName>
        <fullName evidence="5">Peroxisome biosynthesis protein PAS1</fullName>
    </alternativeName>
</protein>
<gene>
    <name evidence="6" type="primary">PEX1</name>
    <name evidence="5" type="synonym">PAS1</name>
    <name type="ordered locus">PAS_chr3_1045</name>
</gene>